<name>FABH_LARHH</name>
<gene>
    <name evidence="1" type="primary">fabH</name>
    <name type="ordered locus">LHK_00572</name>
</gene>
<keyword id="KW-0012">Acyltransferase</keyword>
<keyword id="KW-0963">Cytoplasm</keyword>
<keyword id="KW-0275">Fatty acid biosynthesis</keyword>
<keyword id="KW-0276">Fatty acid metabolism</keyword>
<keyword id="KW-0444">Lipid biosynthesis</keyword>
<keyword id="KW-0443">Lipid metabolism</keyword>
<keyword id="KW-0511">Multifunctional enzyme</keyword>
<keyword id="KW-1185">Reference proteome</keyword>
<keyword id="KW-0808">Transferase</keyword>
<accession>C1DCE8</accession>
<protein>
    <recommendedName>
        <fullName evidence="1">Beta-ketoacyl-[acyl-carrier-protein] synthase III</fullName>
        <shortName evidence="1">Beta-ketoacyl-ACP synthase III</shortName>
        <shortName evidence="1">KAS III</shortName>
        <ecNumber evidence="1">2.3.1.180</ecNumber>
    </recommendedName>
    <alternativeName>
        <fullName evidence="1">3-oxoacyl-[acyl-carrier-protein] synthase 3</fullName>
    </alternativeName>
    <alternativeName>
        <fullName evidence="1">3-oxoacyl-[acyl-carrier-protein] synthase III</fullName>
    </alternativeName>
</protein>
<sequence length="319" mass="34080">MPYARILGTGSYLPDTILTNTELAKRVETTDEWIVSRTGIQERRLAAEGQLTSDLAYRAALRAIEAAGIEAASIEMIIVATTTPDMVFPSTAVVVQERLGLAGVPAFDVQAVCAGFMYAFATANAFIRSGQIKRALVIGAETLSRLIDWDDRRTCILFGDGAGAVVLGADEDTGILSTELRADGRYKDILKCDARPSQGVLAGNPFVYMDGQAVFKFAVKALADIAEVTLAKAGKTKADLDWLVPHQANLRIIEATARHLALPMDKVVVTLPNHANTSAASVPLALDAAVRDGRIRRGELLLLEGIGGGFAWGSALLHY</sequence>
<evidence type="ECO:0000255" key="1">
    <source>
        <dbReference type="HAMAP-Rule" id="MF_01815"/>
    </source>
</evidence>
<dbReference type="EC" id="2.3.1.180" evidence="1"/>
<dbReference type="EMBL" id="CP001154">
    <property type="protein sequence ID" value="ACO73565.1"/>
    <property type="molecule type" value="Genomic_DNA"/>
</dbReference>
<dbReference type="RefSeq" id="WP_012696057.1">
    <property type="nucleotide sequence ID" value="NC_012559.1"/>
</dbReference>
<dbReference type="SMR" id="C1DCE8"/>
<dbReference type="STRING" id="557598.LHK_00572"/>
<dbReference type="KEGG" id="lhk:LHK_00572"/>
<dbReference type="eggNOG" id="COG0332">
    <property type="taxonomic scope" value="Bacteria"/>
</dbReference>
<dbReference type="HOGENOM" id="CLU_039592_4_1_4"/>
<dbReference type="UniPathway" id="UPA00094"/>
<dbReference type="Proteomes" id="UP000002010">
    <property type="component" value="Chromosome"/>
</dbReference>
<dbReference type="GO" id="GO:0005737">
    <property type="term" value="C:cytoplasm"/>
    <property type="evidence" value="ECO:0007669"/>
    <property type="project" value="UniProtKB-SubCell"/>
</dbReference>
<dbReference type="GO" id="GO:0004315">
    <property type="term" value="F:3-oxoacyl-[acyl-carrier-protein] synthase activity"/>
    <property type="evidence" value="ECO:0007669"/>
    <property type="project" value="InterPro"/>
</dbReference>
<dbReference type="GO" id="GO:0033818">
    <property type="term" value="F:beta-ketoacyl-acyl-carrier-protein synthase III activity"/>
    <property type="evidence" value="ECO:0007669"/>
    <property type="project" value="UniProtKB-UniRule"/>
</dbReference>
<dbReference type="GO" id="GO:0006633">
    <property type="term" value="P:fatty acid biosynthetic process"/>
    <property type="evidence" value="ECO:0007669"/>
    <property type="project" value="UniProtKB-UniRule"/>
</dbReference>
<dbReference type="CDD" id="cd00830">
    <property type="entry name" value="KAS_III"/>
    <property type="match status" value="1"/>
</dbReference>
<dbReference type="FunFam" id="3.40.47.10:FF:000004">
    <property type="entry name" value="3-oxoacyl-[acyl-carrier-protein] synthase 3"/>
    <property type="match status" value="1"/>
</dbReference>
<dbReference type="Gene3D" id="3.40.47.10">
    <property type="match status" value="1"/>
</dbReference>
<dbReference type="HAMAP" id="MF_01815">
    <property type="entry name" value="FabH"/>
    <property type="match status" value="1"/>
</dbReference>
<dbReference type="InterPro" id="IPR013747">
    <property type="entry name" value="ACP_syn_III_C"/>
</dbReference>
<dbReference type="InterPro" id="IPR013751">
    <property type="entry name" value="ACP_syn_III_N"/>
</dbReference>
<dbReference type="InterPro" id="IPR004655">
    <property type="entry name" value="FabH"/>
</dbReference>
<dbReference type="InterPro" id="IPR016039">
    <property type="entry name" value="Thiolase-like"/>
</dbReference>
<dbReference type="NCBIfam" id="TIGR00747">
    <property type="entry name" value="fabH"/>
    <property type="match status" value="1"/>
</dbReference>
<dbReference type="NCBIfam" id="NF006829">
    <property type="entry name" value="PRK09352.1"/>
    <property type="match status" value="1"/>
</dbReference>
<dbReference type="PANTHER" id="PTHR43091">
    <property type="entry name" value="3-OXOACYL-[ACYL-CARRIER-PROTEIN] SYNTHASE"/>
    <property type="match status" value="1"/>
</dbReference>
<dbReference type="PANTHER" id="PTHR43091:SF1">
    <property type="entry name" value="BETA-KETOACYL-[ACYL-CARRIER-PROTEIN] SYNTHASE III, CHLOROPLASTIC"/>
    <property type="match status" value="1"/>
</dbReference>
<dbReference type="Pfam" id="PF08545">
    <property type="entry name" value="ACP_syn_III"/>
    <property type="match status" value="1"/>
</dbReference>
<dbReference type="Pfam" id="PF08541">
    <property type="entry name" value="ACP_syn_III_C"/>
    <property type="match status" value="1"/>
</dbReference>
<dbReference type="SUPFAM" id="SSF53901">
    <property type="entry name" value="Thiolase-like"/>
    <property type="match status" value="1"/>
</dbReference>
<proteinExistence type="inferred from homology"/>
<feature type="chain" id="PRO_1000187876" description="Beta-ketoacyl-[acyl-carrier-protein] synthase III">
    <location>
        <begin position="1"/>
        <end position="319"/>
    </location>
</feature>
<feature type="region of interest" description="ACP-binding" evidence="1">
    <location>
        <begin position="247"/>
        <end position="251"/>
    </location>
</feature>
<feature type="active site" evidence="1">
    <location>
        <position position="113"/>
    </location>
</feature>
<feature type="active site" evidence="1">
    <location>
        <position position="246"/>
    </location>
</feature>
<feature type="active site" evidence="1">
    <location>
        <position position="276"/>
    </location>
</feature>
<reference key="1">
    <citation type="journal article" date="2009" name="PLoS Genet.">
        <title>The complete genome and proteome of Laribacter hongkongensis reveal potential mechanisms for adaptations to different temperatures and habitats.</title>
        <authorList>
            <person name="Woo P.C.Y."/>
            <person name="Lau S.K.P."/>
            <person name="Tse H."/>
            <person name="Teng J.L.L."/>
            <person name="Curreem S.O."/>
            <person name="Tsang A.K.L."/>
            <person name="Fan R.Y.Y."/>
            <person name="Wong G.K.M."/>
            <person name="Huang Y."/>
            <person name="Loman N.J."/>
            <person name="Snyder L.A.S."/>
            <person name="Cai J.J."/>
            <person name="Huang J.-D."/>
            <person name="Mak W."/>
            <person name="Pallen M.J."/>
            <person name="Lok S."/>
            <person name="Yuen K.-Y."/>
        </authorList>
    </citation>
    <scope>NUCLEOTIDE SEQUENCE [LARGE SCALE GENOMIC DNA]</scope>
    <source>
        <strain>HLHK9</strain>
    </source>
</reference>
<comment type="function">
    <text evidence="1">Catalyzes the condensation reaction of fatty acid synthesis by the addition to an acyl acceptor of two carbons from malonyl-ACP. Catalyzes the first condensation reaction which initiates fatty acid synthesis and may therefore play a role in governing the total rate of fatty acid production. Possesses both acetoacetyl-ACP synthase and acetyl transacylase activities. Its substrate specificity determines the biosynthesis of branched-chain and/or straight-chain of fatty acids.</text>
</comment>
<comment type="catalytic activity">
    <reaction evidence="1">
        <text>malonyl-[ACP] + acetyl-CoA + H(+) = 3-oxobutanoyl-[ACP] + CO2 + CoA</text>
        <dbReference type="Rhea" id="RHEA:12080"/>
        <dbReference type="Rhea" id="RHEA-COMP:9623"/>
        <dbReference type="Rhea" id="RHEA-COMP:9625"/>
        <dbReference type="ChEBI" id="CHEBI:15378"/>
        <dbReference type="ChEBI" id="CHEBI:16526"/>
        <dbReference type="ChEBI" id="CHEBI:57287"/>
        <dbReference type="ChEBI" id="CHEBI:57288"/>
        <dbReference type="ChEBI" id="CHEBI:78449"/>
        <dbReference type="ChEBI" id="CHEBI:78450"/>
        <dbReference type="EC" id="2.3.1.180"/>
    </reaction>
</comment>
<comment type="pathway">
    <text evidence="1">Lipid metabolism; fatty acid biosynthesis.</text>
</comment>
<comment type="subunit">
    <text evidence="1">Homodimer.</text>
</comment>
<comment type="subcellular location">
    <subcellularLocation>
        <location evidence="1">Cytoplasm</location>
    </subcellularLocation>
</comment>
<comment type="domain">
    <text evidence="1">The last Arg residue of the ACP-binding site is essential for the weak association between ACP/AcpP and FabH.</text>
</comment>
<comment type="similarity">
    <text evidence="1">Belongs to the thiolase-like superfamily. FabH family.</text>
</comment>
<organism>
    <name type="scientific">Laribacter hongkongensis (strain HLHK9)</name>
    <dbReference type="NCBI Taxonomy" id="557598"/>
    <lineage>
        <taxon>Bacteria</taxon>
        <taxon>Pseudomonadati</taxon>
        <taxon>Pseudomonadota</taxon>
        <taxon>Betaproteobacteria</taxon>
        <taxon>Neisseriales</taxon>
        <taxon>Aquaspirillaceae</taxon>
        <taxon>Laribacter</taxon>
    </lineage>
</organism>